<gene>
    <name type="primary">VRK3</name>
</gene>
<protein>
    <recommendedName>
        <fullName>Serine/threonine-protein kinase VRK3</fullName>
        <ecNumber>2.7.11.22</ecNumber>
    </recommendedName>
    <alternativeName>
        <fullName>Vaccinia-related kinase 3</fullName>
    </alternativeName>
</protein>
<dbReference type="EC" id="2.7.11.22"/>
<dbReference type="EMBL" id="AB031052">
    <property type="protein sequence ID" value="BAA90769.1"/>
    <property type="molecule type" value="mRNA"/>
</dbReference>
<dbReference type="EMBL" id="AF514788">
    <property type="protein sequence ID" value="AAP47180.1"/>
    <property type="molecule type" value="mRNA"/>
</dbReference>
<dbReference type="EMBL" id="AK292918">
    <property type="protein sequence ID" value="BAF85607.1"/>
    <property type="molecule type" value="mRNA"/>
</dbReference>
<dbReference type="EMBL" id="AK303010">
    <property type="protein sequence ID" value="BAG64141.1"/>
    <property type="molecule type" value="mRNA"/>
</dbReference>
<dbReference type="EMBL" id="AC011452">
    <property type="status" value="NOT_ANNOTATED_CDS"/>
    <property type="molecule type" value="Genomic_DNA"/>
</dbReference>
<dbReference type="EMBL" id="BC023556">
    <property type="protein sequence ID" value="AAH23556.1"/>
    <property type="molecule type" value="mRNA"/>
</dbReference>
<dbReference type="EMBL" id="BC095449">
    <property type="protein sequence ID" value="AAH95449.1"/>
    <property type="molecule type" value="mRNA"/>
</dbReference>
<dbReference type="CCDS" id="CCDS12791.1">
    <molecule id="Q8IV63-1"/>
</dbReference>
<dbReference type="CCDS" id="CCDS33076.1">
    <molecule id="Q8IV63-3"/>
</dbReference>
<dbReference type="CCDS" id="CCDS77334.1">
    <molecule id="Q8IV63-2"/>
</dbReference>
<dbReference type="RefSeq" id="NP_001020949.1">
    <molecule id="Q8IV63-3"/>
    <property type="nucleotide sequence ID" value="NM_001025778.2"/>
</dbReference>
<dbReference type="RefSeq" id="NP_001295349.1">
    <molecule id="Q8IV63-2"/>
    <property type="nucleotide sequence ID" value="NM_001308420.3"/>
</dbReference>
<dbReference type="RefSeq" id="NP_057524.3">
    <molecule id="Q8IV63-1"/>
    <property type="nucleotide sequence ID" value="NM_016440.3"/>
</dbReference>
<dbReference type="RefSeq" id="XP_005259028.1">
    <molecule id="Q8IV63-1"/>
    <property type="nucleotide sequence ID" value="XM_005258971.4"/>
</dbReference>
<dbReference type="RefSeq" id="XP_005259029.1">
    <molecule id="Q8IV63-3"/>
    <property type="nucleotide sequence ID" value="XM_005258972.5"/>
</dbReference>
<dbReference type="RefSeq" id="XP_006723300.1">
    <molecule id="Q8IV63-1"/>
    <property type="nucleotide sequence ID" value="XM_006723237.4"/>
</dbReference>
<dbReference type="RefSeq" id="XP_006723301.1">
    <molecule id="Q8IV63-3"/>
    <property type="nucleotide sequence ID" value="XM_006723238.5"/>
</dbReference>
<dbReference type="RefSeq" id="XP_011525325.1">
    <property type="nucleotide sequence ID" value="XM_011527023.2"/>
</dbReference>
<dbReference type="RefSeq" id="XP_054177127.1">
    <molecule id="Q8IV63-1"/>
    <property type="nucleotide sequence ID" value="XM_054321152.1"/>
</dbReference>
<dbReference type="RefSeq" id="XP_054177128.1">
    <molecule id="Q8IV63-1"/>
    <property type="nucleotide sequence ID" value="XM_054321153.1"/>
</dbReference>
<dbReference type="RefSeq" id="XP_054177131.1">
    <molecule id="Q8IV63-3"/>
    <property type="nucleotide sequence ID" value="XM_054321156.1"/>
</dbReference>
<dbReference type="RefSeq" id="XP_054177132.1">
    <molecule id="Q8IV63-3"/>
    <property type="nucleotide sequence ID" value="XM_054321157.1"/>
</dbReference>
<dbReference type="PDB" id="2JII">
    <property type="method" value="X-ray"/>
    <property type="resolution" value="2.00 A"/>
    <property type="chains" value="A/B=146-474"/>
</dbReference>
<dbReference type="PDBsum" id="2JII"/>
<dbReference type="SMR" id="Q8IV63"/>
<dbReference type="BioGRID" id="119394">
    <property type="interactions" value="146"/>
</dbReference>
<dbReference type="FunCoup" id="Q8IV63">
    <property type="interactions" value="3336"/>
</dbReference>
<dbReference type="IntAct" id="Q8IV63">
    <property type="interactions" value="39"/>
</dbReference>
<dbReference type="MINT" id="Q8IV63"/>
<dbReference type="STRING" id="9606.ENSP00000469880"/>
<dbReference type="ChEMBL" id="CHEMBL3430761"/>
<dbReference type="GlyGen" id="Q8IV63">
    <property type="glycosylation" value="2 sites, 1 O-linked glycan (2 sites)"/>
</dbReference>
<dbReference type="iPTMnet" id="Q8IV63"/>
<dbReference type="PhosphoSitePlus" id="Q8IV63"/>
<dbReference type="BioMuta" id="VRK3"/>
<dbReference type="DMDM" id="45593724"/>
<dbReference type="CPTAC" id="non-CPTAC-6010"/>
<dbReference type="CPTAC" id="non-CPTAC-6011"/>
<dbReference type="jPOST" id="Q8IV63"/>
<dbReference type="MassIVE" id="Q8IV63"/>
<dbReference type="PaxDb" id="9606-ENSP00000469880"/>
<dbReference type="PeptideAtlas" id="Q8IV63"/>
<dbReference type="ProteomicsDB" id="70666">
    <molecule id="Q8IV63-1"/>
</dbReference>
<dbReference type="ProteomicsDB" id="70667">
    <molecule id="Q8IV63-2"/>
</dbReference>
<dbReference type="ProteomicsDB" id="70668">
    <molecule id="Q8IV63-3"/>
</dbReference>
<dbReference type="Pumba" id="Q8IV63"/>
<dbReference type="TopDownProteomics" id="Q8IV63-1">
    <molecule id="Q8IV63-1"/>
</dbReference>
<dbReference type="Antibodypedia" id="18806">
    <property type="antibodies" value="97 antibodies from 26 providers"/>
</dbReference>
<dbReference type="DNASU" id="51231"/>
<dbReference type="Ensembl" id="ENST00000316763.8">
    <molecule id="Q8IV63-1"/>
    <property type="protein sequence ID" value="ENSP00000324636.2"/>
    <property type="gene ID" value="ENSG00000105053.11"/>
</dbReference>
<dbReference type="Ensembl" id="ENST00000377011.6">
    <molecule id="Q8IV63-3"/>
    <property type="protein sequence ID" value="ENSP00000366210.1"/>
    <property type="gene ID" value="ENSG00000105053.11"/>
</dbReference>
<dbReference type="Ensembl" id="ENST00000594092.5">
    <molecule id="Q8IV63-2"/>
    <property type="protein sequence ID" value="ENSP00000472541.1"/>
    <property type="gene ID" value="ENSG00000105053.11"/>
</dbReference>
<dbReference type="Ensembl" id="ENST00000594948.5">
    <molecule id="Q8IV63-1"/>
    <property type="protein sequence ID" value="ENSP00000473171.1"/>
    <property type="gene ID" value="ENSG00000105053.11"/>
</dbReference>
<dbReference type="Ensembl" id="ENST00000599538.5">
    <molecule id="Q8IV63-1"/>
    <property type="protein sequence ID" value="ENSP00000469880.1"/>
    <property type="gene ID" value="ENSG00000105053.11"/>
</dbReference>
<dbReference type="Ensembl" id="ENST00000601341.5">
    <molecule id="Q8IV63-3"/>
    <property type="protein sequence ID" value="ENSP00000470156.1"/>
    <property type="gene ID" value="ENSG00000105053.11"/>
</dbReference>
<dbReference type="GeneID" id="51231"/>
<dbReference type="KEGG" id="hsa:51231"/>
<dbReference type="MANE-Select" id="ENST00000316763.8">
    <property type="protein sequence ID" value="ENSP00000324636.2"/>
    <property type="RefSeq nucleotide sequence ID" value="NM_016440.4"/>
    <property type="RefSeq protein sequence ID" value="NP_057524.3"/>
</dbReference>
<dbReference type="UCSC" id="uc002prg.3">
    <molecule id="Q8IV63-1"/>
    <property type="organism name" value="human"/>
</dbReference>
<dbReference type="AGR" id="HGNC:18996"/>
<dbReference type="CTD" id="51231"/>
<dbReference type="DisGeNET" id="51231"/>
<dbReference type="GeneCards" id="VRK3"/>
<dbReference type="HGNC" id="HGNC:18996">
    <property type="gene designation" value="VRK3"/>
</dbReference>
<dbReference type="HPA" id="ENSG00000105053">
    <property type="expression patterns" value="Tissue enhanced (testis)"/>
</dbReference>
<dbReference type="MIM" id="619771">
    <property type="type" value="gene"/>
</dbReference>
<dbReference type="neXtProt" id="NX_Q8IV63"/>
<dbReference type="OpenTargets" id="ENSG00000105053"/>
<dbReference type="PharmGKB" id="PA134923990"/>
<dbReference type="VEuPathDB" id="HostDB:ENSG00000105053"/>
<dbReference type="eggNOG" id="KOG1164">
    <property type="taxonomic scope" value="Eukaryota"/>
</dbReference>
<dbReference type="GeneTree" id="ENSGT00940000158111"/>
<dbReference type="InParanoid" id="Q8IV63"/>
<dbReference type="OMA" id="VMTLEYE"/>
<dbReference type="OrthoDB" id="2687620at2759"/>
<dbReference type="PAN-GO" id="Q8IV63">
    <property type="GO annotations" value="6 GO annotations based on evolutionary models"/>
</dbReference>
<dbReference type="PhylomeDB" id="Q8IV63"/>
<dbReference type="TreeFam" id="TF106473"/>
<dbReference type="PathwayCommons" id="Q8IV63"/>
<dbReference type="Reactome" id="R-HSA-202670">
    <property type="pathway name" value="ERKs are inactivated"/>
</dbReference>
<dbReference type="SignaLink" id="Q8IV63"/>
<dbReference type="SIGNOR" id="Q8IV63"/>
<dbReference type="BioGRID-ORCS" id="51231">
    <property type="hits" value="9 hits in 1193 CRISPR screens"/>
</dbReference>
<dbReference type="ChiTaRS" id="VRK3">
    <property type="organism name" value="human"/>
</dbReference>
<dbReference type="EvolutionaryTrace" id="Q8IV63"/>
<dbReference type="GenomeRNAi" id="51231"/>
<dbReference type="Pharos" id="Q8IV63">
    <property type="development level" value="Tbio"/>
</dbReference>
<dbReference type="PRO" id="PR:Q8IV63"/>
<dbReference type="Proteomes" id="UP000005640">
    <property type="component" value="Chromosome 19"/>
</dbReference>
<dbReference type="RNAct" id="Q8IV63">
    <property type="molecule type" value="protein"/>
</dbReference>
<dbReference type="Bgee" id="ENSG00000105053">
    <property type="expression patterns" value="Expressed in sperm and 192 other cell types or tissues"/>
</dbReference>
<dbReference type="ExpressionAtlas" id="Q8IV63">
    <property type="expression patterns" value="baseline and differential"/>
</dbReference>
<dbReference type="GO" id="GO:0005737">
    <property type="term" value="C:cytoplasm"/>
    <property type="evidence" value="ECO:0000318"/>
    <property type="project" value="GO_Central"/>
</dbReference>
<dbReference type="GO" id="GO:0043231">
    <property type="term" value="C:intracellular membrane-bounded organelle"/>
    <property type="evidence" value="ECO:0000314"/>
    <property type="project" value="HPA"/>
</dbReference>
<dbReference type="GO" id="GO:0005654">
    <property type="term" value="C:nucleoplasm"/>
    <property type="evidence" value="ECO:0000314"/>
    <property type="project" value="HPA"/>
</dbReference>
<dbReference type="GO" id="GO:0005634">
    <property type="term" value="C:nucleus"/>
    <property type="evidence" value="ECO:0007005"/>
    <property type="project" value="UniProtKB"/>
</dbReference>
<dbReference type="GO" id="GO:0005524">
    <property type="term" value="F:ATP binding"/>
    <property type="evidence" value="ECO:0007669"/>
    <property type="project" value="InterPro"/>
</dbReference>
<dbReference type="GO" id="GO:0072542">
    <property type="term" value="F:protein phosphatase activator activity"/>
    <property type="evidence" value="ECO:0007669"/>
    <property type="project" value="Ensembl"/>
</dbReference>
<dbReference type="GO" id="GO:0019903">
    <property type="term" value="F:protein phosphatase binding"/>
    <property type="evidence" value="ECO:0000314"/>
    <property type="project" value="MGI"/>
</dbReference>
<dbReference type="GO" id="GO:0004674">
    <property type="term" value="F:protein serine/threonine kinase activity"/>
    <property type="evidence" value="ECO:0000318"/>
    <property type="project" value="GO_Central"/>
</dbReference>
<dbReference type="GO" id="GO:0006974">
    <property type="term" value="P:DNA damage response"/>
    <property type="evidence" value="ECO:0000318"/>
    <property type="project" value="GO_Central"/>
</dbReference>
<dbReference type="GO" id="GO:0070373">
    <property type="term" value="P:negative regulation of ERK1 and ERK2 cascade"/>
    <property type="evidence" value="ECO:0007669"/>
    <property type="project" value="Ensembl"/>
</dbReference>
<dbReference type="GO" id="GO:0007165">
    <property type="term" value="P:signal transduction"/>
    <property type="evidence" value="ECO:0000318"/>
    <property type="project" value="GO_Central"/>
</dbReference>
<dbReference type="GO" id="GO:0007519">
    <property type="term" value="P:skeletal muscle tissue development"/>
    <property type="evidence" value="ECO:0000316"/>
    <property type="project" value="FlyBase"/>
</dbReference>
<dbReference type="FunFam" id="1.10.510.10:FF:000516">
    <property type="entry name" value="VRK serine/threonine kinase 3"/>
    <property type="match status" value="1"/>
</dbReference>
<dbReference type="Gene3D" id="1.10.510.10">
    <property type="entry name" value="Transferase(Phosphotransferase) domain 1"/>
    <property type="match status" value="1"/>
</dbReference>
<dbReference type="InterPro" id="IPR050235">
    <property type="entry name" value="CK1_Ser-Thr_kinase"/>
</dbReference>
<dbReference type="InterPro" id="IPR011009">
    <property type="entry name" value="Kinase-like_dom_sf"/>
</dbReference>
<dbReference type="InterPro" id="IPR000719">
    <property type="entry name" value="Prot_kinase_dom"/>
</dbReference>
<dbReference type="InterPro" id="IPR026870">
    <property type="entry name" value="Zinc_ribbon_dom"/>
</dbReference>
<dbReference type="PANTHER" id="PTHR11909">
    <property type="entry name" value="CASEIN KINASE-RELATED"/>
    <property type="match status" value="1"/>
</dbReference>
<dbReference type="Pfam" id="PF00069">
    <property type="entry name" value="Pkinase"/>
    <property type="match status" value="1"/>
</dbReference>
<dbReference type="Pfam" id="PF13240">
    <property type="entry name" value="Zn_Ribbon_1"/>
    <property type="match status" value="1"/>
</dbReference>
<dbReference type="SMART" id="SM00220">
    <property type="entry name" value="S_TKc"/>
    <property type="match status" value="1"/>
</dbReference>
<dbReference type="SUPFAM" id="SSF56112">
    <property type="entry name" value="Protein kinase-like (PK-like)"/>
    <property type="match status" value="1"/>
</dbReference>
<dbReference type="PROSITE" id="PS50011">
    <property type="entry name" value="PROTEIN_KINASE_DOM"/>
    <property type="match status" value="1"/>
</dbReference>
<organism>
    <name type="scientific">Homo sapiens</name>
    <name type="common">Human</name>
    <dbReference type="NCBI Taxonomy" id="9606"/>
    <lineage>
        <taxon>Eukaryota</taxon>
        <taxon>Metazoa</taxon>
        <taxon>Chordata</taxon>
        <taxon>Craniata</taxon>
        <taxon>Vertebrata</taxon>
        <taxon>Euteleostomi</taxon>
        <taxon>Mammalia</taxon>
        <taxon>Eutheria</taxon>
        <taxon>Euarchontoglires</taxon>
        <taxon>Primates</taxon>
        <taxon>Haplorrhini</taxon>
        <taxon>Catarrhini</taxon>
        <taxon>Hominidae</taxon>
        <taxon>Homo</taxon>
    </lineage>
</organism>
<sequence>MISFCPDCGKSIQAAFKFCPYCGNSLPVEEHVGSQTFVNPHVSSFQGSKRGLNSSFETSPKKVKWSSTVTSPRLSLFSDGDSSESEDTLSSSERSKGSGSRPPTPKSSPQKTRKSPQVTRGSPQKTSCSPQKTRQSPQTLKRSRVTTSLEALPTGTVLTDKSGRQWKLKSFQTRDNQGILYEAAPTSTLTCDSGPQKQKFSLKLDAKDGRLFNEQNFFQRAAKPLQVNKWKKLYSTPLLAIPTCMGFGVHQDKYRFLVLPSLGRSLQSALDVSPKHVLSERSVLQVACRLLDALEFLHENEYVHGNVTAENIFVDPEDQSQVTLAGYGFAFRYCPSGKHVAYVEGSRSPHEGDLEFISMDLHKGCGPSRRSDLQSLGYCMLKWLYGFLPWTNCLPNTEDIMKQKQKFVDKPGPFVGPCGHWIRPSETLQKYLKVVMALTYEEKPPYAMLRNNLEALLQDLRVSPYDPIGLPMVP</sequence>
<name>VRK3_HUMAN</name>
<accession>Q8IV63</accession>
<accession>A6NEG5</accession>
<accession>A8KA53</accession>
<accession>Q502Y2</accession>
<accession>Q9P2V8</accession>
<reference key="1">
    <citation type="submission" date="1999-08" db="EMBL/GenBank/DDBJ databases">
        <title>Vaccinia related kinase 3 (VRK3).</title>
        <authorList>
            <person name="Nezu J."/>
        </authorList>
    </citation>
    <scope>NUCLEOTIDE SEQUENCE [MRNA] (ISOFORM 1)</scope>
    <source>
        <tissue>Liver</tissue>
    </source>
</reference>
<reference key="2">
    <citation type="submission" date="2002-05" db="EMBL/GenBank/DDBJ databases">
        <title>Cloning and characterization of a novel human VRK3 gene.</title>
        <authorList>
            <person name="Ni X."/>
            <person name="Xie Y."/>
            <person name="Mao Y."/>
        </authorList>
    </citation>
    <scope>NUCLEOTIDE SEQUENCE [MRNA] (ISOFORM 1)</scope>
</reference>
<reference key="3">
    <citation type="journal article" date="2004" name="Nat. Genet.">
        <title>Complete sequencing and characterization of 21,243 full-length human cDNAs.</title>
        <authorList>
            <person name="Ota T."/>
            <person name="Suzuki Y."/>
            <person name="Nishikawa T."/>
            <person name="Otsuki T."/>
            <person name="Sugiyama T."/>
            <person name="Irie R."/>
            <person name="Wakamatsu A."/>
            <person name="Hayashi K."/>
            <person name="Sato H."/>
            <person name="Nagai K."/>
            <person name="Kimura K."/>
            <person name="Makita H."/>
            <person name="Sekine M."/>
            <person name="Obayashi M."/>
            <person name="Nishi T."/>
            <person name="Shibahara T."/>
            <person name="Tanaka T."/>
            <person name="Ishii S."/>
            <person name="Yamamoto J."/>
            <person name="Saito K."/>
            <person name="Kawai Y."/>
            <person name="Isono Y."/>
            <person name="Nakamura Y."/>
            <person name="Nagahari K."/>
            <person name="Murakami K."/>
            <person name="Yasuda T."/>
            <person name="Iwayanagi T."/>
            <person name="Wagatsuma M."/>
            <person name="Shiratori A."/>
            <person name="Sudo H."/>
            <person name="Hosoiri T."/>
            <person name="Kaku Y."/>
            <person name="Kodaira H."/>
            <person name="Kondo H."/>
            <person name="Sugawara M."/>
            <person name="Takahashi M."/>
            <person name="Kanda K."/>
            <person name="Yokoi T."/>
            <person name="Furuya T."/>
            <person name="Kikkawa E."/>
            <person name="Omura Y."/>
            <person name="Abe K."/>
            <person name="Kamihara K."/>
            <person name="Katsuta N."/>
            <person name="Sato K."/>
            <person name="Tanikawa M."/>
            <person name="Yamazaki M."/>
            <person name="Ninomiya K."/>
            <person name="Ishibashi T."/>
            <person name="Yamashita H."/>
            <person name="Murakawa K."/>
            <person name="Fujimori K."/>
            <person name="Tanai H."/>
            <person name="Kimata M."/>
            <person name="Watanabe M."/>
            <person name="Hiraoka S."/>
            <person name="Chiba Y."/>
            <person name="Ishida S."/>
            <person name="Ono Y."/>
            <person name="Takiguchi S."/>
            <person name="Watanabe S."/>
            <person name="Yosida M."/>
            <person name="Hotuta T."/>
            <person name="Kusano J."/>
            <person name="Kanehori K."/>
            <person name="Takahashi-Fujii A."/>
            <person name="Hara H."/>
            <person name="Tanase T.-O."/>
            <person name="Nomura Y."/>
            <person name="Togiya S."/>
            <person name="Komai F."/>
            <person name="Hara R."/>
            <person name="Takeuchi K."/>
            <person name="Arita M."/>
            <person name="Imose N."/>
            <person name="Musashino K."/>
            <person name="Yuuki H."/>
            <person name="Oshima A."/>
            <person name="Sasaki N."/>
            <person name="Aotsuka S."/>
            <person name="Yoshikawa Y."/>
            <person name="Matsunawa H."/>
            <person name="Ichihara T."/>
            <person name="Shiohata N."/>
            <person name="Sano S."/>
            <person name="Moriya S."/>
            <person name="Momiyama H."/>
            <person name="Satoh N."/>
            <person name="Takami S."/>
            <person name="Terashima Y."/>
            <person name="Suzuki O."/>
            <person name="Nakagawa S."/>
            <person name="Senoh A."/>
            <person name="Mizoguchi H."/>
            <person name="Goto Y."/>
            <person name="Shimizu F."/>
            <person name="Wakebe H."/>
            <person name="Hishigaki H."/>
            <person name="Watanabe T."/>
            <person name="Sugiyama A."/>
            <person name="Takemoto M."/>
            <person name="Kawakami B."/>
            <person name="Yamazaki M."/>
            <person name="Watanabe K."/>
            <person name="Kumagai A."/>
            <person name="Itakura S."/>
            <person name="Fukuzumi Y."/>
            <person name="Fujimori Y."/>
            <person name="Komiyama M."/>
            <person name="Tashiro H."/>
            <person name="Tanigami A."/>
            <person name="Fujiwara T."/>
            <person name="Ono T."/>
            <person name="Yamada K."/>
            <person name="Fujii Y."/>
            <person name="Ozaki K."/>
            <person name="Hirao M."/>
            <person name="Ohmori Y."/>
            <person name="Kawabata A."/>
            <person name="Hikiji T."/>
            <person name="Kobatake N."/>
            <person name="Inagaki H."/>
            <person name="Ikema Y."/>
            <person name="Okamoto S."/>
            <person name="Okitani R."/>
            <person name="Kawakami T."/>
            <person name="Noguchi S."/>
            <person name="Itoh T."/>
            <person name="Shigeta K."/>
            <person name="Senba T."/>
            <person name="Matsumura K."/>
            <person name="Nakajima Y."/>
            <person name="Mizuno T."/>
            <person name="Morinaga M."/>
            <person name="Sasaki M."/>
            <person name="Togashi T."/>
            <person name="Oyama M."/>
            <person name="Hata H."/>
            <person name="Watanabe M."/>
            <person name="Komatsu T."/>
            <person name="Mizushima-Sugano J."/>
            <person name="Satoh T."/>
            <person name="Shirai Y."/>
            <person name="Takahashi Y."/>
            <person name="Nakagawa K."/>
            <person name="Okumura K."/>
            <person name="Nagase T."/>
            <person name="Nomura N."/>
            <person name="Kikuchi H."/>
            <person name="Masuho Y."/>
            <person name="Yamashita R."/>
            <person name="Nakai K."/>
            <person name="Yada T."/>
            <person name="Nakamura Y."/>
            <person name="Ohara O."/>
            <person name="Isogai T."/>
            <person name="Sugano S."/>
        </authorList>
    </citation>
    <scope>NUCLEOTIDE SEQUENCE [LARGE SCALE MRNA] (ISOFORMS 1 AND 3)</scope>
    <source>
        <tissue>Testis</tissue>
        <tissue>Trachea</tissue>
    </source>
</reference>
<reference key="4">
    <citation type="journal article" date="2004" name="Nature">
        <title>The DNA sequence and biology of human chromosome 19.</title>
        <authorList>
            <person name="Grimwood J."/>
            <person name="Gordon L.A."/>
            <person name="Olsen A.S."/>
            <person name="Terry A."/>
            <person name="Schmutz J."/>
            <person name="Lamerdin J.E."/>
            <person name="Hellsten U."/>
            <person name="Goodstein D."/>
            <person name="Couronne O."/>
            <person name="Tran-Gyamfi M."/>
            <person name="Aerts A."/>
            <person name="Altherr M."/>
            <person name="Ashworth L."/>
            <person name="Bajorek E."/>
            <person name="Black S."/>
            <person name="Branscomb E."/>
            <person name="Caenepeel S."/>
            <person name="Carrano A.V."/>
            <person name="Caoile C."/>
            <person name="Chan Y.M."/>
            <person name="Christensen M."/>
            <person name="Cleland C.A."/>
            <person name="Copeland A."/>
            <person name="Dalin E."/>
            <person name="Dehal P."/>
            <person name="Denys M."/>
            <person name="Detter J.C."/>
            <person name="Escobar J."/>
            <person name="Flowers D."/>
            <person name="Fotopulos D."/>
            <person name="Garcia C."/>
            <person name="Georgescu A.M."/>
            <person name="Glavina T."/>
            <person name="Gomez M."/>
            <person name="Gonzales E."/>
            <person name="Groza M."/>
            <person name="Hammon N."/>
            <person name="Hawkins T."/>
            <person name="Haydu L."/>
            <person name="Ho I."/>
            <person name="Huang W."/>
            <person name="Israni S."/>
            <person name="Jett J."/>
            <person name="Kadner K."/>
            <person name="Kimball H."/>
            <person name="Kobayashi A."/>
            <person name="Larionov V."/>
            <person name="Leem S.-H."/>
            <person name="Lopez F."/>
            <person name="Lou Y."/>
            <person name="Lowry S."/>
            <person name="Malfatti S."/>
            <person name="Martinez D."/>
            <person name="McCready P.M."/>
            <person name="Medina C."/>
            <person name="Morgan J."/>
            <person name="Nelson K."/>
            <person name="Nolan M."/>
            <person name="Ovcharenko I."/>
            <person name="Pitluck S."/>
            <person name="Pollard M."/>
            <person name="Popkie A.P."/>
            <person name="Predki P."/>
            <person name="Quan G."/>
            <person name="Ramirez L."/>
            <person name="Rash S."/>
            <person name="Retterer J."/>
            <person name="Rodriguez A."/>
            <person name="Rogers S."/>
            <person name="Salamov A."/>
            <person name="Salazar A."/>
            <person name="She X."/>
            <person name="Smith D."/>
            <person name="Slezak T."/>
            <person name="Solovyev V."/>
            <person name="Thayer N."/>
            <person name="Tice H."/>
            <person name="Tsai M."/>
            <person name="Ustaszewska A."/>
            <person name="Vo N."/>
            <person name="Wagner M."/>
            <person name="Wheeler J."/>
            <person name="Wu K."/>
            <person name="Xie G."/>
            <person name="Yang J."/>
            <person name="Dubchak I."/>
            <person name="Furey T.S."/>
            <person name="DeJong P."/>
            <person name="Dickson M."/>
            <person name="Gordon D."/>
            <person name="Eichler E.E."/>
            <person name="Pennacchio L.A."/>
            <person name="Richardson P."/>
            <person name="Stubbs L."/>
            <person name="Rokhsar D.S."/>
            <person name="Myers R.M."/>
            <person name="Rubin E.M."/>
            <person name="Lucas S.M."/>
        </authorList>
    </citation>
    <scope>NUCLEOTIDE SEQUENCE [LARGE SCALE GENOMIC DNA]</scope>
</reference>
<reference key="5">
    <citation type="journal article" date="2004" name="Genome Res.">
        <title>The status, quality, and expansion of the NIH full-length cDNA project: the Mammalian Gene Collection (MGC).</title>
        <authorList>
            <consortium name="The MGC Project Team"/>
        </authorList>
    </citation>
    <scope>NUCLEOTIDE SEQUENCE [LARGE SCALE MRNA] (ISOFORMS 1 AND 2)</scope>
    <source>
        <tissue>Brain</tissue>
        <tissue>Skin</tissue>
    </source>
</reference>
<reference key="6">
    <citation type="journal article" date="2004" name="J. Biol. Chem.">
        <title>Characterization of three paralogous members of the Mammalian vaccinia related kinase family.</title>
        <authorList>
            <person name="Nichols R.J."/>
            <person name="Traktman P."/>
        </authorList>
    </citation>
    <scope>FUNCTION</scope>
    <scope>SUBCELLULAR LOCATION</scope>
    <scope>NUCLEAR LOCALIZATION SIGNAL</scope>
</reference>
<reference key="7">
    <citation type="journal article" date="2008" name="Mol. Cell. Proteomics">
        <title>Proteomics identification of nuclear Ran GTPase as an inhibitor of human VRK1 and VRK2 (vaccinia-related kinase) activities.</title>
        <authorList>
            <person name="Sanz-Garcia M."/>
            <person name="Lopez-Sanchez I."/>
            <person name="Lazo P.A."/>
        </authorList>
    </citation>
    <scope>INTERACTION WITH RAN</scope>
</reference>
<reference key="8">
    <citation type="journal article" date="2008" name="Proc. Natl. Acad. Sci. U.S.A.">
        <title>A quantitative atlas of mitotic phosphorylation.</title>
        <authorList>
            <person name="Dephoure N."/>
            <person name="Zhou C."/>
            <person name="Villen J."/>
            <person name="Beausoleil S.A."/>
            <person name="Bakalarski C.E."/>
            <person name="Elledge S.J."/>
            <person name="Gygi S.P."/>
        </authorList>
    </citation>
    <scope>PHOSPHORYLATION [LARGE SCALE ANALYSIS] AT SER-55 AND SER-59</scope>
    <scope>IDENTIFICATION BY MASS SPECTROMETRY [LARGE SCALE ANALYSIS]</scope>
    <source>
        <tissue>Cervix carcinoma</tissue>
    </source>
</reference>
<reference key="9">
    <citation type="journal article" date="2009" name="Sci. Signal.">
        <title>Quantitative phosphoproteomic analysis of T cell receptor signaling reveals system-wide modulation of protein-protein interactions.</title>
        <authorList>
            <person name="Mayya V."/>
            <person name="Lundgren D.H."/>
            <person name="Hwang S.-I."/>
            <person name="Rezaul K."/>
            <person name="Wu L."/>
            <person name="Eng J.K."/>
            <person name="Rodionov V."/>
            <person name="Han D.K."/>
        </authorList>
    </citation>
    <scope>PHOSPHORYLATION [LARGE SCALE ANALYSIS] AT SER-82; SER-83 AND SER-90</scope>
    <scope>IDENTIFICATION BY MASS SPECTROMETRY [LARGE SCALE ANALYSIS]</scope>
    <source>
        <tissue>Leukemic T-cell</tissue>
    </source>
</reference>
<reference key="10">
    <citation type="journal article" date="2010" name="Sci. Signal.">
        <title>Quantitative phosphoproteomics reveals widespread full phosphorylation site occupancy during mitosis.</title>
        <authorList>
            <person name="Olsen J.V."/>
            <person name="Vermeulen M."/>
            <person name="Santamaria A."/>
            <person name="Kumar C."/>
            <person name="Miller M.L."/>
            <person name="Jensen L.J."/>
            <person name="Gnad F."/>
            <person name="Cox J."/>
            <person name="Jensen T.S."/>
            <person name="Nigg E.A."/>
            <person name="Brunak S."/>
            <person name="Mann M."/>
        </authorList>
    </citation>
    <scope>PHOSPHORYLATION [LARGE SCALE ANALYSIS] AT SER-82 AND SER-83</scope>
    <scope>IDENTIFICATION BY MASS SPECTROMETRY [LARGE SCALE ANALYSIS]</scope>
    <source>
        <tissue>Cervix carcinoma</tissue>
    </source>
</reference>
<reference key="11">
    <citation type="journal article" date="2011" name="Sci. Signal.">
        <title>System-wide temporal characterization of the proteome and phosphoproteome of human embryonic stem cell differentiation.</title>
        <authorList>
            <person name="Rigbolt K.T."/>
            <person name="Prokhorova T.A."/>
            <person name="Akimov V."/>
            <person name="Henningsen J."/>
            <person name="Johansen P.T."/>
            <person name="Kratchmarova I."/>
            <person name="Kassem M."/>
            <person name="Mann M."/>
            <person name="Olsen J.V."/>
            <person name="Blagoev B."/>
        </authorList>
    </citation>
    <scope>PHOSPHORYLATION [LARGE SCALE ANALYSIS] AT SER-82; SER-83; SER-115 AND SER-122</scope>
    <scope>IDENTIFICATION BY MASS SPECTROMETRY [LARGE SCALE ANALYSIS]</scope>
</reference>
<reference key="12">
    <citation type="journal article" date="2013" name="J. Proteome Res.">
        <title>Toward a comprehensive characterization of a human cancer cell phosphoproteome.</title>
        <authorList>
            <person name="Zhou H."/>
            <person name="Di Palma S."/>
            <person name="Preisinger C."/>
            <person name="Peng M."/>
            <person name="Polat A.N."/>
            <person name="Heck A.J."/>
            <person name="Mohammed S."/>
        </authorList>
    </citation>
    <scope>PHOSPHORYLATION [LARGE SCALE ANALYSIS] AT SER-54; SER-59 AND SER-83</scope>
    <scope>IDENTIFICATION BY MASS SPECTROMETRY [LARGE SCALE ANALYSIS]</scope>
    <source>
        <tissue>Cervix carcinoma</tissue>
        <tissue>Erythroleukemia</tissue>
    </source>
</reference>
<reference key="13">
    <citation type="journal article" date="2015" name="Biochim. Biophys. Acta">
        <title>Presumed pseudokinase VRK3 functions as a BAF kinase.</title>
        <authorList>
            <person name="Park C.H."/>
            <person name="Ryu H.G."/>
            <person name="Kim S.H."/>
            <person name="Lee D."/>
            <person name="Song H."/>
            <person name="Kim K.T."/>
        </authorList>
    </citation>
    <scope>FUNCTION</scope>
    <scope>MUTAGENESIS OF LYS-203</scope>
    <scope>CATALYTIC ACTIVITY</scope>
</reference>
<reference key="14">
    <citation type="journal article" date="2016" name="Sci. Rep.">
        <title>Stress-induced nuclear translocation of CDK5 suppresses neuronal death by downregulating ERK activation via VRK3 phosphorylation.</title>
        <authorList>
            <person name="Song H."/>
            <person name="Kim W."/>
            <person name="Choi J.H."/>
            <person name="Kim S.H."/>
            <person name="Lee D."/>
            <person name="Park C.H."/>
            <person name="Kim S."/>
            <person name="Kim D.Y."/>
            <person name="Kim K.T."/>
        </authorList>
    </citation>
    <scope>FUNCTION</scope>
    <scope>PHOSPHORYLATION AT SER-108</scope>
    <scope>SUBCELLULAR LOCATION</scope>
    <scope>MUTAGENESIS OF SER-108</scope>
    <scope>INTERACTION WITH DUSP3</scope>
</reference>
<reference key="15">
    <citation type="journal article" date="2016" name="Sci. Rep.">
        <title>VRK3-mediated nuclear localization of HSP70 prevents glutamate excitotoxicity-induced apoptosis and Abeta accumulation via enhancement of ERK phosphatase VHR activity.</title>
        <authorList>
            <person name="Song H."/>
            <person name="Kim W."/>
            <person name="Kim S.H."/>
            <person name="Kim K.T."/>
        </authorList>
    </citation>
    <scope>FUNCTION</scope>
    <scope>INTERACTION WITH HSP70/HSPA1A AND DUSP3</scope>
</reference>
<reference key="16">
    <citation type="journal article" date="2020" name="J. Cell Sci.">
        <title>RNF144a induces ERK-dependent cell death under oxidative stress via downregulation of vaccinia-related kinase 3.</title>
        <authorList>
            <person name="Han S.H."/>
            <person name="Kim K.T."/>
        </authorList>
    </citation>
    <scope>UBIQUITINATION BY RNF144A</scope>
    <scope>SUBCELLULAR LOCATION</scope>
</reference>
<reference key="17">
    <citation type="journal article" date="2009" name="Structure">
        <title>Structure of the pseudokinase VRK3 reveals a degraded catalytic site, a highly conserved kinase fold, and a putative regulatory binding site.</title>
        <authorList>
            <person name="Scheeff E.D."/>
            <person name="Eswaran J."/>
            <person name="Bunkoczi G."/>
            <person name="Knapp S."/>
            <person name="Manning G."/>
        </authorList>
    </citation>
    <scope>X-RAY CRYSTALLOGRAPHY (2.0 ANGSTROMS) OF 146-474</scope>
    <scope>FUNCTION</scope>
    <scope>LACK OF CATALYTIC ACTIVITY</scope>
</reference>
<reference key="18">
    <citation type="journal article" date="2007" name="Nature">
        <title>Patterns of somatic mutation in human cancer genomes.</title>
        <authorList>
            <person name="Greenman C."/>
            <person name="Stephens P."/>
            <person name="Smith R."/>
            <person name="Dalgliesh G.L."/>
            <person name="Hunter C."/>
            <person name="Bignell G."/>
            <person name="Davies H."/>
            <person name="Teague J."/>
            <person name="Butler A."/>
            <person name="Stevens C."/>
            <person name="Edkins S."/>
            <person name="O'Meara S."/>
            <person name="Vastrik I."/>
            <person name="Schmidt E.E."/>
            <person name="Avis T."/>
            <person name="Barthorpe S."/>
            <person name="Bhamra G."/>
            <person name="Buck G."/>
            <person name="Choudhury B."/>
            <person name="Clements J."/>
            <person name="Cole J."/>
            <person name="Dicks E."/>
            <person name="Forbes S."/>
            <person name="Gray K."/>
            <person name="Halliday K."/>
            <person name="Harrison R."/>
            <person name="Hills K."/>
            <person name="Hinton J."/>
            <person name="Jenkinson A."/>
            <person name="Jones D."/>
            <person name="Menzies A."/>
            <person name="Mironenko T."/>
            <person name="Perry J."/>
            <person name="Raine K."/>
            <person name="Richardson D."/>
            <person name="Shepherd R."/>
            <person name="Small A."/>
            <person name="Tofts C."/>
            <person name="Varian J."/>
            <person name="Webb T."/>
            <person name="West S."/>
            <person name="Widaa S."/>
            <person name="Yates A."/>
            <person name="Cahill D.P."/>
            <person name="Louis D.N."/>
            <person name="Goldstraw P."/>
            <person name="Nicholson A.G."/>
            <person name="Brasseur F."/>
            <person name="Looijenga L."/>
            <person name="Weber B.L."/>
            <person name="Chiew Y.-E."/>
            <person name="DeFazio A."/>
            <person name="Greaves M.F."/>
            <person name="Green A.R."/>
            <person name="Campbell P."/>
            <person name="Birney E."/>
            <person name="Easton D.F."/>
            <person name="Chenevix-Trench G."/>
            <person name="Tan M.-H."/>
            <person name="Khoo S.K."/>
            <person name="Teh B.T."/>
            <person name="Yuen S.T."/>
            <person name="Leung S.Y."/>
            <person name="Wooster R."/>
            <person name="Futreal P.A."/>
            <person name="Stratton M.R."/>
        </authorList>
    </citation>
    <scope>VARIANTS [LARGE SCALE ANALYSIS] PHE-59; THR-105; LEU-171; LEU-268; TYR-288; CYS-370 AND GLY-371</scope>
</reference>
<keyword id="KW-0002">3D-structure</keyword>
<keyword id="KW-0025">Alternative splicing</keyword>
<keyword id="KW-0963">Cytoplasm</keyword>
<keyword id="KW-0547">Nucleotide-binding</keyword>
<keyword id="KW-0539">Nucleus</keyword>
<keyword id="KW-0597">Phosphoprotein</keyword>
<keyword id="KW-1267">Proteomics identification</keyword>
<keyword id="KW-1185">Reference proteome</keyword>
<keyword id="KW-0808">Transferase</keyword>
<keyword id="KW-0832">Ubl conjugation</keyword>
<proteinExistence type="evidence at protein level"/>
<comment type="function">
    <text evidence="2 5 8 9 10 11">Plays a role in the regulation of the cell cycle by phosphorylating the nuclear envelope protein barrier-to-autointegration factor/BAF that is required for disassembly and reassembly, respectively, of the nuclear envelope during mitosis (PubMed:25899223). Under normal physiological conditions, negatively regulates ERK activity along with VHR/DUSP3 phosphatase in the nucleus, causing timely and transient action of ERK. Stress conditions activate CDK5 which phosphorylates VRK3 to increase VHR phosphatase activity and suppress prolonged ERK activation that causes cell death (PubMed:27346674). For example, upon glutamate induction, promotes nuclear localization of HSP70/HSPA1A to inhibit ERK activation via VHR/DUSP3 phosphatase (PubMed:27941812).</text>
</comment>
<comment type="catalytic activity">
    <reaction evidence="9">
        <text>L-seryl-[protein] + ATP = O-phospho-L-seryl-[protein] + ADP + H(+)</text>
        <dbReference type="Rhea" id="RHEA:17989"/>
        <dbReference type="Rhea" id="RHEA-COMP:9863"/>
        <dbReference type="Rhea" id="RHEA-COMP:11604"/>
        <dbReference type="ChEBI" id="CHEBI:15378"/>
        <dbReference type="ChEBI" id="CHEBI:29999"/>
        <dbReference type="ChEBI" id="CHEBI:30616"/>
        <dbReference type="ChEBI" id="CHEBI:83421"/>
        <dbReference type="ChEBI" id="CHEBI:456216"/>
        <dbReference type="EC" id="2.7.11.22"/>
    </reaction>
</comment>
<comment type="subunit">
    <text evidence="1 7 11">Interacts with DUSP3 (PubMed:27346674, PubMed:27941812). Interacts with RAN. Interacts with HSP70/HSPA1A (PubMed:27941812).</text>
</comment>
<comment type="interaction">
    <interactant intactId="EBI-1058605">
        <id>Q8IV63</id>
    </interactant>
    <interactant intactId="EBI-751711">
        <id>P61244</id>
        <label>MAX</label>
    </interactant>
    <organismsDiffer>false</organismsDiffer>
    <experiments>2</experiments>
</comment>
<comment type="interaction">
    <interactant intactId="EBI-1058605">
        <id>Q8IV63</id>
    </interactant>
    <interactant intactId="EBI-946185">
        <id>Q70EL1</id>
        <label>USP54</label>
    </interactant>
    <organismsDiffer>false</organismsDiffer>
    <experiments>2</experiments>
</comment>
<comment type="subcellular location">
    <subcellularLocation>
        <location evidence="5 10 12">Nucleus</location>
    </subcellularLocation>
    <subcellularLocation>
        <location evidence="12">Cytoplasm</location>
    </subcellularLocation>
    <text evidence="12">Under oxidative stress, migrates from the nucleus to the cytoplasm.</text>
</comment>
<comment type="alternative products">
    <event type="alternative splicing"/>
    <isoform>
        <id>Q8IV63-1</id>
        <name>1</name>
        <sequence type="displayed"/>
    </isoform>
    <isoform>
        <id>Q8IV63-2</id>
        <name>2</name>
        <sequence type="described" ref="VSP_008544 VSP_008545"/>
    </isoform>
    <isoform>
        <id>Q8IV63-3</id>
        <name>3</name>
        <sequence type="described" ref="VSP_043409"/>
    </isoform>
</comment>
<comment type="PTM">
    <text evidence="9">Phosphorylated at Ser-108 by CDK5; leading to protection of the cell against H2O2-induced apoptosis.</text>
</comment>
<comment type="PTM">
    <text evidence="12">Ubiquitinated by RNF144A.</text>
</comment>
<comment type="similarity">
    <text evidence="15">Belongs to the protein kinase superfamily. CK1 Ser/Thr protein kinase family. VRK subfamily.</text>
</comment>
<comment type="caution">
    <text evidence="16">Inactive as a kinase due to its inability to bind ATP.</text>
</comment>
<feature type="chain" id="PRO_0000086808" description="Serine/threonine-protein kinase VRK3">
    <location>
        <begin position="1"/>
        <end position="474"/>
    </location>
</feature>
<feature type="domain" description="Protein kinase" evidence="3">
    <location>
        <begin position="166"/>
        <end position="457"/>
    </location>
</feature>
<feature type="region of interest" description="Disordered" evidence="4">
    <location>
        <begin position="41"/>
        <end position="152"/>
    </location>
</feature>
<feature type="short sequence motif" description="Nuclear localization signal" evidence="5">
    <location>
        <begin position="49"/>
        <end position="64"/>
    </location>
</feature>
<feature type="compositionally biased region" description="Polar residues" evidence="4">
    <location>
        <begin position="41"/>
        <end position="58"/>
    </location>
</feature>
<feature type="compositionally biased region" description="Low complexity" evidence="4">
    <location>
        <begin position="88"/>
        <end position="101"/>
    </location>
</feature>
<feature type="compositionally biased region" description="Polar residues" evidence="4">
    <location>
        <begin position="107"/>
        <end position="149"/>
    </location>
</feature>
<feature type="modified residue" description="Phosphoserine" evidence="21">
    <location>
        <position position="54"/>
    </location>
</feature>
<feature type="modified residue" description="Phosphoserine" evidence="17">
    <location>
        <position position="55"/>
    </location>
</feature>
<feature type="modified residue" description="Phosphoserine" evidence="17 21">
    <location>
        <position position="59"/>
    </location>
</feature>
<feature type="modified residue" description="Phosphoserine" evidence="18 19 20">
    <location>
        <position position="82"/>
    </location>
</feature>
<feature type="modified residue" description="Phosphoserine" evidence="18 19 20 21">
    <location>
        <position position="83"/>
    </location>
</feature>
<feature type="modified residue" description="Phosphoserine" evidence="18">
    <location>
        <position position="90"/>
    </location>
</feature>
<feature type="modified residue" description="Phosphoserine; by CDK5" evidence="10">
    <location>
        <position position="108"/>
    </location>
</feature>
<feature type="modified residue" description="Phosphoserine" evidence="20">
    <location>
        <position position="115"/>
    </location>
</feature>
<feature type="modified residue" description="Phosphoserine" evidence="20">
    <location>
        <position position="122"/>
    </location>
</feature>
<feature type="splice variant" id="VSP_043409" description="In isoform 3." evidence="13">
    <location>
        <begin position="47"/>
        <end position="96"/>
    </location>
</feature>
<feature type="splice variant" id="VSP_008544" description="In isoform 2." evidence="14">
    <original>FVDKPG</original>
    <variation>LPWDSF</variation>
    <location>
        <begin position="407"/>
        <end position="412"/>
    </location>
</feature>
<feature type="splice variant" id="VSP_008545" description="In isoform 2." evidence="14">
    <location>
        <begin position="413"/>
        <end position="474"/>
    </location>
</feature>
<feature type="sequence variant" id="VAR_041295" description="In dbSNP:rs2033262." evidence="6">
    <original>S</original>
    <variation>F</variation>
    <location>
        <position position="59"/>
    </location>
</feature>
<feature type="sequence variant" id="VAR_041296" description="In dbSNP:rs11547882." evidence="6">
    <original>P</original>
    <variation>T</variation>
    <location>
        <position position="105"/>
    </location>
</feature>
<feature type="sequence variant" id="VAR_051682" description="In dbSNP:rs11547881.">
    <original>S</original>
    <variation>P</variation>
    <location>
        <position position="170"/>
    </location>
</feature>
<feature type="sequence variant" id="VAR_041297" description="In dbSNP:rs11547883." evidence="6">
    <original>F</original>
    <variation>L</variation>
    <location>
        <position position="171"/>
    </location>
</feature>
<feature type="sequence variant" id="VAR_051683" description="In dbSNP:rs11879620.">
    <original>T</original>
    <variation>A</variation>
    <location>
        <position position="188"/>
    </location>
</feature>
<feature type="sequence variant" id="VAR_041298" description="In dbSNP:rs10410075." evidence="6">
    <original>S</original>
    <variation>L</variation>
    <location>
        <position position="268"/>
    </location>
</feature>
<feature type="sequence variant" id="VAR_041299" description="In dbSNP:rs10409482." evidence="6">
    <original>C</original>
    <variation>Y</variation>
    <location>
        <position position="288"/>
    </location>
</feature>
<feature type="sequence variant" id="VAR_051684" description="In dbSNP:rs35261919.">
    <original>H</original>
    <variation>L</variation>
    <location>
        <position position="304"/>
    </location>
</feature>
<feature type="sequence variant" id="VAR_041300" description="In dbSNP:rs35331034." evidence="6">
    <original>R</original>
    <variation>C</variation>
    <location>
        <position position="370"/>
    </location>
</feature>
<feature type="sequence variant" id="VAR_041301" description="In dbSNP:rs56407496." evidence="6">
    <original>S</original>
    <variation>G</variation>
    <location>
        <position position="371"/>
    </location>
</feature>
<feature type="mutagenesis site" description="Unable to be phosphorylated by CDK5." evidence="10">
    <original>S</original>
    <variation>A</variation>
    <location>
        <position position="108"/>
    </location>
</feature>
<feature type="mutagenesis site" description="Complete loss of kinase activity." evidence="9">
    <original>K</original>
    <variation>E</variation>
    <location>
        <position position="203"/>
    </location>
</feature>
<feature type="sequence conflict" description="In Ref. 2; AAP47180." evidence="15" ref="2">
    <original>K</original>
    <variation>E</variation>
    <location>
        <position position="161"/>
    </location>
</feature>
<feature type="helix" evidence="22">
    <location>
        <begin position="142"/>
        <end position="148"/>
    </location>
</feature>
<feature type="strand" evidence="22">
    <location>
        <begin position="157"/>
        <end position="159"/>
    </location>
</feature>
<feature type="strand" evidence="22">
    <location>
        <begin position="165"/>
        <end position="175"/>
    </location>
</feature>
<feature type="strand" evidence="22">
    <location>
        <begin position="178"/>
        <end position="185"/>
    </location>
</feature>
<feature type="strand" evidence="22">
    <location>
        <begin position="200"/>
        <end position="206"/>
    </location>
</feature>
<feature type="helix" evidence="22">
    <location>
        <begin position="211"/>
        <end position="221"/>
    </location>
</feature>
<feature type="helix" evidence="22">
    <location>
        <begin position="224"/>
        <end position="233"/>
    </location>
</feature>
<feature type="strand" evidence="22">
    <location>
        <begin position="246"/>
        <end position="250"/>
    </location>
</feature>
<feature type="turn" evidence="22">
    <location>
        <begin position="251"/>
        <end position="253"/>
    </location>
</feature>
<feature type="strand" evidence="22">
    <location>
        <begin position="254"/>
        <end position="260"/>
    </location>
</feature>
<feature type="helix" evidence="22">
    <location>
        <begin position="266"/>
        <end position="272"/>
    </location>
</feature>
<feature type="helix" evidence="22">
    <location>
        <begin position="274"/>
        <end position="276"/>
    </location>
</feature>
<feature type="helix" evidence="22">
    <location>
        <begin position="280"/>
        <end position="299"/>
    </location>
</feature>
<feature type="strand" evidence="22">
    <location>
        <begin position="311"/>
        <end position="315"/>
    </location>
</feature>
<feature type="strand" evidence="22">
    <location>
        <begin position="318"/>
        <end position="324"/>
    </location>
</feature>
<feature type="helix" evidence="22">
    <location>
        <begin position="327"/>
        <end position="329"/>
    </location>
</feature>
<feature type="helix" evidence="22">
    <location>
        <begin position="335"/>
        <end position="337"/>
    </location>
</feature>
<feature type="turn" evidence="22">
    <location>
        <begin position="354"/>
        <end position="356"/>
    </location>
</feature>
<feature type="helix" evidence="22">
    <location>
        <begin position="359"/>
        <end position="362"/>
    </location>
</feature>
<feature type="helix" evidence="22">
    <location>
        <begin position="369"/>
        <end position="385"/>
    </location>
</feature>
<feature type="helix" evidence="22">
    <location>
        <begin position="391"/>
        <end position="393"/>
    </location>
</feature>
<feature type="helix" evidence="22">
    <location>
        <begin position="397"/>
        <end position="409"/>
    </location>
</feature>
<feature type="helix" evidence="22">
    <location>
        <begin position="426"/>
        <end position="436"/>
    </location>
</feature>
<feature type="helix" evidence="22">
    <location>
        <begin position="446"/>
        <end position="459"/>
    </location>
</feature>
<evidence type="ECO:0000250" key="1"/>
<evidence type="ECO:0000250" key="2">
    <source>
        <dbReference type="UniProtKB" id="Q8K3G5"/>
    </source>
</evidence>
<evidence type="ECO:0000255" key="3">
    <source>
        <dbReference type="PROSITE-ProRule" id="PRU00159"/>
    </source>
</evidence>
<evidence type="ECO:0000256" key="4">
    <source>
        <dbReference type="SAM" id="MobiDB-lite"/>
    </source>
</evidence>
<evidence type="ECO:0000269" key="5">
    <source>
    </source>
</evidence>
<evidence type="ECO:0000269" key="6">
    <source>
    </source>
</evidence>
<evidence type="ECO:0000269" key="7">
    <source>
    </source>
</evidence>
<evidence type="ECO:0000269" key="8">
    <source>
    </source>
</evidence>
<evidence type="ECO:0000269" key="9">
    <source>
    </source>
</evidence>
<evidence type="ECO:0000269" key="10">
    <source>
    </source>
</evidence>
<evidence type="ECO:0000269" key="11">
    <source>
    </source>
</evidence>
<evidence type="ECO:0000269" key="12">
    <source>
    </source>
</evidence>
<evidence type="ECO:0000303" key="13">
    <source>
    </source>
</evidence>
<evidence type="ECO:0000303" key="14">
    <source>
    </source>
</evidence>
<evidence type="ECO:0000305" key="15"/>
<evidence type="ECO:0000305" key="16">
    <source>
    </source>
</evidence>
<evidence type="ECO:0007744" key="17">
    <source>
    </source>
</evidence>
<evidence type="ECO:0007744" key="18">
    <source>
    </source>
</evidence>
<evidence type="ECO:0007744" key="19">
    <source>
    </source>
</evidence>
<evidence type="ECO:0007744" key="20">
    <source>
    </source>
</evidence>
<evidence type="ECO:0007744" key="21">
    <source>
    </source>
</evidence>
<evidence type="ECO:0007829" key="22">
    <source>
        <dbReference type="PDB" id="2JII"/>
    </source>
</evidence>